<name>RNPA_RICTY</name>
<gene>
    <name evidence="1" type="primary">rnpA</name>
    <name type="ordered locus">RT0599</name>
</gene>
<evidence type="ECO:0000255" key="1">
    <source>
        <dbReference type="HAMAP-Rule" id="MF_00227"/>
    </source>
</evidence>
<protein>
    <recommendedName>
        <fullName evidence="1">Ribonuclease P protein component</fullName>
        <shortName evidence="1">RNase P protein</shortName>
        <shortName evidence="1">RNaseP protein</shortName>
        <ecNumber evidence="1">3.1.26.5</ecNumber>
    </recommendedName>
    <alternativeName>
        <fullName evidence="1">Protein C5</fullName>
    </alternativeName>
</protein>
<comment type="function">
    <text evidence="1">RNaseP catalyzes the removal of the 5'-leader sequence from pre-tRNA to produce the mature 5'-terminus. It can also cleave other RNA substrates such as 4.5S RNA. The protein component plays an auxiliary but essential role in vivo by binding to the 5'-leader sequence and broadening the substrate specificity of the ribozyme.</text>
</comment>
<comment type="catalytic activity">
    <reaction evidence="1">
        <text>Endonucleolytic cleavage of RNA, removing 5'-extranucleotides from tRNA precursor.</text>
        <dbReference type="EC" id="3.1.26.5"/>
    </reaction>
</comment>
<comment type="subunit">
    <text evidence="1">Consists of a catalytic RNA component (M1 or rnpB) and a protein subunit.</text>
</comment>
<comment type="similarity">
    <text evidence="1">Belongs to the RnpA family.</text>
</comment>
<feature type="chain" id="PRO_0000274857" description="Ribonuclease P protein component">
    <location>
        <begin position="1"/>
        <end position="118"/>
    </location>
</feature>
<keyword id="KW-0255">Endonuclease</keyword>
<keyword id="KW-0378">Hydrolase</keyword>
<keyword id="KW-0540">Nuclease</keyword>
<keyword id="KW-0694">RNA-binding</keyword>
<keyword id="KW-0819">tRNA processing</keyword>
<dbReference type="EC" id="3.1.26.5" evidence="1"/>
<dbReference type="EMBL" id="AE017197">
    <property type="protein sequence ID" value="AAU04064.1"/>
    <property type="molecule type" value="Genomic_DNA"/>
</dbReference>
<dbReference type="RefSeq" id="WP_011191045.1">
    <property type="nucleotide sequence ID" value="NC_006142.1"/>
</dbReference>
<dbReference type="SMR" id="Q68WC8"/>
<dbReference type="KEGG" id="rty:RT0599"/>
<dbReference type="eggNOG" id="COG0594">
    <property type="taxonomic scope" value="Bacteria"/>
</dbReference>
<dbReference type="HOGENOM" id="CLU_2047938_0_0_5"/>
<dbReference type="OrthoDB" id="7160815at2"/>
<dbReference type="Proteomes" id="UP000000604">
    <property type="component" value="Chromosome"/>
</dbReference>
<dbReference type="GO" id="GO:0030677">
    <property type="term" value="C:ribonuclease P complex"/>
    <property type="evidence" value="ECO:0007669"/>
    <property type="project" value="TreeGrafter"/>
</dbReference>
<dbReference type="GO" id="GO:0042781">
    <property type="term" value="F:3'-tRNA processing endoribonuclease activity"/>
    <property type="evidence" value="ECO:0007669"/>
    <property type="project" value="TreeGrafter"/>
</dbReference>
<dbReference type="GO" id="GO:0004526">
    <property type="term" value="F:ribonuclease P activity"/>
    <property type="evidence" value="ECO:0007669"/>
    <property type="project" value="UniProtKB-UniRule"/>
</dbReference>
<dbReference type="GO" id="GO:0000049">
    <property type="term" value="F:tRNA binding"/>
    <property type="evidence" value="ECO:0007669"/>
    <property type="project" value="UniProtKB-UniRule"/>
</dbReference>
<dbReference type="GO" id="GO:0001682">
    <property type="term" value="P:tRNA 5'-leader removal"/>
    <property type="evidence" value="ECO:0007669"/>
    <property type="project" value="UniProtKB-UniRule"/>
</dbReference>
<dbReference type="Gene3D" id="3.30.230.10">
    <property type="match status" value="1"/>
</dbReference>
<dbReference type="HAMAP" id="MF_00227">
    <property type="entry name" value="RNase_P"/>
    <property type="match status" value="1"/>
</dbReference>
<dbReference type="InterPro" id="IPR020568">
    <property type="entry name" value="Ribosomal_Su5_D2-typ_SF"/>
</dbReference>
<dbReference type="InterPro" id="IPR014721">
    <property type="entry name" value="Ribsml_uS5_D2-typ_fold_subgr"/>
</dbReference>
<dbReference type="InterPro" id="IPR000100">
    <property type="entry name" value="RNase_P"/>
</dbReference>
<dbReference type="InterPro" id="IPR020539">
    <property type="entry name" value="RNase_P_CS"/>
</dbReference>
<dbReference type="NCBIfam" id="TIGR00188">
    <property type="entry name" value="rnpA"/>
    <property type="match status" value="1"/>
</dbReference>
<dbReference type="PANTHER" id="PTHR33992">
    <property type="entry name" value="RIBONUCLEASE P PROTEIN COMPONENT"/>
    <property type="match status" value="1"/>
</dbReference>
<dbReference type="PANTHER" id="PTHR33992:SF1">
    <property type="entry name" value="RIBONUCLEASE P PROTEIN COMPONENT"/>
    <property type="match status" value="1"/>
</dbReference>
<dbReference type="Pfam" id="PF00825">
    <property type="entry name" value="Ribonuclease_P"/>
    <property type="match status" value="1"/>
</dbReference>
<dbReference type="SUPFAM" id="SSF54211">
    <property type="entry name" value="Ribosomal protein S5 domain 2-like"/>
    <property type="match status" value="1"/>
</dbReference>
<dbReference type="PROSITE" id="PS00648">
    <property type="entry name" value="RIBONUCLEASE_P"/>
    <property type="match status" value="1"/>
</dbReference>
<reference key="1">
    <citation type="journal article" date="2004" name="J. Bacteriol.">
        <title>Complete genome sequence of Rickettsia typhi and comparison with sequences of other Rickettsiae.</title>
        <authorList>
            <person name="McLeod M.P."/>
            <person name="Qin X."/>
            <person name="Karpathy S.E."/>
            <person name="Gioia J."/>
            <person name="Highlander S.K."/>
            <person name="Fox G.E."/>
            <person name="McNeill T.Z."/>
            <person name="Jiang H."/>
            <person name="Muzny D."/>
            <person name="Jacob L.S."/>
            <person name="Hawes A.C."/>
            <person name="Sodergren E."/>
            <person name="Gill R."/>
            <person name="Hume J."/>
            <person name="Morgan M."/>
            <person name="Fan G."/>
            <person name="Amin A.G."/>
            <person name="Gibbs R.A."/>
            <person name="Hong C."/>
            <person name="Yu X.-J."/>
            <person name="Walker D.H."/>
            <person name="Weinstock G.M."/>
        </authorList>
    </citation>
    <scope>NUCLEOTIDE SEQUENCE [LARGE SCALE GENOMIC DNA]</scope>
    <source>
        <strain>ATCC VR-144 / Wilmington</strain>
    </source>
</reference>
<organism>
    <name type="scientific">Rickettsia typhi (strain ATCC VR-144 / Wilmington)</name>
    <dbReference type="NCBI Taxonomy" id="257363"/>
    <lineage>
        <taxon>Bacteria</taxon>
        <taxon>Pseudomonadati</taxon>
        <taxon>Pseudomonadota</taxon>
        <taxon>Alphaproteobacteria</taxon>
        <taxon>Rickettsiales</taxon>
        <taxon>Rickettsiaceae</taxon>
        <taxon>Rickettsieae</taxon>
        <taxon>Rickettsia</taxon>
        <taxon>typhus group</taxon>
    </lineage>
</organism>
<accession>Q68WC8</accession>
<sequence>MCITSLKNQKEFELINKLGQKFYERYFILVIAKKLPKIFLESKYNTFLGIKVSRKLNKKAVVRNKIKRRIRHLMRIIVNDSSVKAIKFAIIIIPRKGFEEINFSHLNYELSKIILRNI</sequence>
<proteinExistence type="inferred from homology"/>